<proteinExistence type="inferred from homology"/>
<organism>
    <name type="scientific">Citrobacter koseri (strain ATCC BAA-895 / CDC 4225-83 / SGSC4696)</name>
    <dbReference type="NCBI Taxonomy" id="290338"/>
    <lineage>
        <taxon>Bacteria</taxon>
        <taxon>Pseudomonadati</taxon>
        <taxon>Pseudomonadota</taxon>
        <taxon>Gammaproteobacteria</taxon>
        <taxon>Enterobacterales</taxon>
        <taxon>Enterobacteriaceae</taxon>
        <taxon>Citrobacter</taxon>
    </lineage>
</organism>
<reference key="1">
    <citation type="submission" date="2007-08" db="EMBL/GenBank/DDBJ databases">
        <authorList>
            <consortium name="The Citrobacter koseri Genome Sequencing Project"/>
            <person name="McClelland M."/>
            <person name="Sanderson E.K."/>
            <person name="Porwollik S."/>
            <person name="Spieth J."/>
            <person name="Clifton W.S."/>
            <person name="Latreille P."/>
            <person name="Courtney L."/>
            <person name="Wang C."/>
            <person name="Pepin K."/>
            <person name="Bhonagiri V."/>
            <person name="Nash W."/>
            <person name="Johnson M."/>
            <person name="Thiruvilangam P."/>
            <person name="Wilson R."/>
        </authorList>
    </citation>
    <scope>NUCLEOTIDE SEQUENCE [LARGE SCALE GENOMIC DNA]</scope>
    <source>
        <strain>ATCC BAA-895 / CDC 4225-83 / SGSC4696</strain>
    </source>
</reference>
<evidence type="ECO:0000255" key="1">
    <source>
        <dbReference type="HAMAP-Rule" id="MF_01199"/>
    </source>
</evidence>
<name>IRAM_CITK8</name>
<dbReference type="EMBL" id="CP000822">
    <property type="protein sequence ID" value="ABV14015.1"/>
    <property type="molecule type" value="Genomic_DNA"/>
</dbReference>
<dbReference type="RefSeq" id="WP_012133728.1">
    <property type="nucleotide sequence ID" value="NC_009792.1"/>
</dbReference>
<dbReference type="SMR" id="A8AKK2"/>
<dbReference type="STRING" id="290338.CKO_02909"/>
<dbReference type="GeneID" id="45136733"/>
<dbReference type="KEGG" id="cko:CKO_02909"/>
<dbReference type="HOGENOM" id="CLU_143527_0_0_6"/>
<dbReference type="OrthoDB" id="6555626at2"/>
<dbReference type="Proteomes" id="UP000008148">
    <property type="component" value="Chromosome"/>
</dbReference>
<dbReference type="GO" id="GO:0005737">
    <property type="term" value="C:cytoplasm"/>
    <property type="evidence" value="ECO:0007669"/>
    <property type="project" value="UniProtKB-SubCell"/>
</dbReference>
<dbReference type="GO" id="GO:0009267">
    <property type="term" value="P:cellular response to starvation"/>
    <property type="evidence" value="ECO:0007669"/>
    <property type="project" value="UniProtKB-UniRule"/>
</dbReference>
<dbReference type="Gene3D" id="2.40.50.650">
    <property type="match status" value="1"/>
</dbReference>
<dbReference type="HAMAP" id="MF_01199">
    <property type="entry name" value="Anti_adapt_IraM"/>
    <property type="match status" value="1"/>
</dbReference>
<dbReference type="InterPro" id="IPR014448">
    <property type="entry name" value="Anti-adapter_IraM"/>
</dbReference>
<dbReference type="InterPro" id="IPR038679">
    <property type="entry name" value="PmrD_sf"/>
</dbReference>
<dbReference type="NCBIfam" id="NF007393">
    <property type="entry name" value="PRK09919.1"/>
    <property type="match status" value="1"/>
</dbReference>
<comment type="function">
    <text evidence="1">Involved in the stabilization of the sigma stress factor RpoS.</text>
</comment>
<comment type="subcellular location">
    <subcellularLocation>
        <location evidence="1">Cytoplasm</location>
    </subcellularLocation>
</comment>
<comment type="similarity">
    <text evidence="1">Belongs to the IraM/RssC family.</text>
</comment>
<gene>
    <name evidence="1" type="primary">iraM</name>
    <name type="ordered locus">CKO_02909</name>
</gene>
<keyword id="KW-0963">Cytoplasm</keyword>
<keyword id="KW-1185">Reference proteome</keyword>
<keyword id="KW-0346">Stress response</keyword>
<accession>A8AKK2</accession>
<sequence>MEWSVENNLVCPTTGTAFALTSGAENLKFILWYKGDYFLRTGSVISPEDSGVLANGKKRNIKILHVFPYSNALWASFHNRIDCPGNGVVTINHCARQQQCVFTLCPYGARTVTG</sequence>
<feature type="chain" id="PRO_0000337880" description="Anti-adapter protein IraM">
    <location>
        <begin position="1"/>
        <end position="114"/>
    </location>
</feature>
<protein>
    <recommendedName>
        <fullName evidence="1">Anti-adapter protein IraM</fullName>
    </recommendedName>
</protein>